<name>UFM1_DROMO</name>
<dbReference type="EMBL" id="CH933808">
    <property type="protein sequence ID" value="EDW10563.1"/>
    <property type="molecule type" value="Genomic_DNA"/>
</dbReference>
<dbReference type="SMR" id="B4KSR4"/>
<dbReference type="FunCoup" id="B4KSR4">
    <property type="interactions" value="1031"/>
</dbReference>
<dbReference type="EnsemblMetazoa" id="FBtr0171890">
    <property type="protein sequence ID" value="FBpp0170382"/>
    <property type="gene ID" value="FBgn0143896"/>
</dbReference>
<dbReference type="EnsemblMetazoa" id="XM_002006592.4">
    <property type="protein sequence ID" value="XP_002006628.1"/>
    <property type="gene ID" value="LOC6580826"/>
</dbReference>
<dbReference type="GeneID" id="6580826"/>
<dbReference type="KEGG" id="dmo:Dmoj_GI21165"/>
<dbReference type="CTD" id="51569"/>
<dbReference type="eggNOG" id="KOG3483">
    <property type="taxonomic scope" value="Eukaryota"/>
</dbReference>
<dbReference type="HOGENOM" id="CLU_175114_0_0_1"/>
<dbReference type="InParanoid" id="B4KSR4"/>
<dbReference type="OMA" id="MEHAVGK"/>
<dbReference type="OrthoDB" id="284357at2759"/>
<dbReference type="PhylomeDB" id="B4KSR4"/>
<dbReference type="Proteomes" id="UP000009192">
    <property type="component" value="Unassembled WGS sequence"/>
</dbReference>
<dbReference type="GO" id="GO:0005829">
    <property type="term" value="C:cytosol"/>
    <property type="evidence" value="ECO:0007669"/>
    <property type="project" value="EnsemblMetazoa"/>
</dbReference>
<dbReference type="GO" id="GO:0005634">
    <property type="term" value="C:nucleus"/>
    <property type="evidence" value="ECO:0007669"/>
    <property type="project" value="TreeGrafter"/>
</dbReference>
<dbReference type="GO" id="GO:0031386">
    <property type="term" value="F:protein tag activity"/>
    <property type="evidence" value="ECO:0007669"/>
    <property type="project" value="EnsemblMetazoa"/>
</dbReference>
<dbReference type="GO" id="GO:0050905">
    <property type="term" value="P:neuromuscular process"/>
    <property type="evidence" value="ECO:0007669"/>
    <property type="project" value="EnsemblMetazoa"/>
</dbReference>
<dbReference type="GO" id="GO:1990592">
    <property type="term" value="P:protein K69-linked ufmylation"/>
    <property type="evidence" value="ECO:0007669"/>
    <property type="project" value="TreeGrafter"/>
</dbReference>
<dbReference type="CDD" id="cd01766">
    <property type="entry name" value="Ubl_UFM1"/>
    <property type="match status" value="1"/>
</dbReference>
<dbReference type="FunFam" id="3.10.20.90:FF:000044">
    <property type="entry name" value="Ubiquitin-fold modifier 1"/>
    <property type="match status" value="1"/>
</dbReference>
<dbReference type="Gene3D" id="3.10.20.90">
    <property type="entry name" value="Phosphatidylinositol 3-kinase Catalytic Subunit, Chain A, domain 1"/>
    <property type="match status" value="1"/>
</dbReference>
<dbReference type="InterPro" id="IPR029071">
    <property type="entry name" value="Ubiquitin-like_domsf"/>
</dbReference>
<dbReference type="InterPro" id="IPR005375">
    <property type="entry name" value="UFM1"/>
</dbReference>
<dbReference type="PANTHER" id="PTHR15825">
    <property type="entry name" value="UBIQUITIN-FOLD MODIFIER 1"/>
    <property type="match status" value="1"/>
</dbReference>
<dbReference type="PANTHER" id="PTHR15825:SF0">
    <property type="entry name" value="UBIQUITIN-FOLD MODIFIER 1"/>
    <property type="match status" value="1"/>
</dbReference>
<dbReference type="Pfam" id="PF03671">
    <property type="entry name" value="Ufm1"/>
    <property type="match status" value="1"/>
</dbReference>
<dbReference type="PIRSF" id="PIRSF038027">
    <property type="entry name" value="Ubiquitin-like_Ufm1"/>
    <property type="match status" value="1"/>
</dbReference>
<dbReference type="SUPFAM" id="SSF54236">
    <property type="entry name" value="Ubiquitin-like"/>
    <property type="match status" value="1"/>
</dbReference>
<proteinExistence type="inferred from homology"/>
<sequence>MSKVTFKITLTSDPKLPFKVLSVPEATPFTAVLKFASEEFKVPAETSAIITDDGIGISPQQTAGNVFLKHGSELRLIPRDRVGH</sequence>
<gene>
    <name type="ORF">GI21165</name>
</gene>
<accession>B4KSR4</accession>
<protein>
    <recommendedName>
        <fullName>Ubiquitin-fold modifier 1</fullName>
    </recommendedName>
</protein>
<organism>
    <name type="scientific">Drosophila mojavensis</name>
    <name type="common">Fruit fly</name>
    <dbReference type="NCBI Taxonomy" id="7230"/>
    <lineage>
        <taxon>Eukaryota</taxon>
        <taxon>Metazoa</taxon>
        <taxon>Ecdysozoa</taxon>
        <taxon>Arthropoda</taxon>
        <taxon>Hexapoda</taxon>
        <taxon>Insecta</taxon>
        <taxon>Pterygota</taxon>
        <taxon>Neoptera</taxon>
        <taxon>Endopterygota</taxon>
        <taxon>Diptera</taxon>
        <taxon>Brachycera</taxon>
        <taxon>Muscomorpha</taxon>
        <taxon>Ephydroidea</taxon>
        <taxon>Drosophilidae</taxon>
        <taxon>Drosophila</taxon>
    </lineage>
</organism>
<feature type="chain" id="PRO_0000392005" description="Ubiquitin-fold modifier 1">
    <location>
        <begin position="1"/>
        <end position="83"/>
    </location>
</feature>
<feature type="propeptide" id="PRO_0000392006" description="Removed in mature form" evidence="1">
    <location>
        <position position="84"/>
    </location>
</feature>
<feature type="cross-link" description="Glycyl lysine isopeptide (Gly-Lys) (interchain with K-? in acceptor proteins)" evidence="2">
    <location>
        <position position="83"/>
    </location>
</feature>
<reference key="1">
    <citation type="journal article" date="2007" name="Nature">
        <title>Evolution of genes and genomes on the Drosophila phylogeny.</title>
        <authorList>
            <consortium name="Drosophila 12 genomes consortium"/>
        </authorList>
    </citation>
    <scope>NUCLEOTIDE SEQUENCE [LARGE SCALE GENOMIC DNA]</scope>
    <source>
        <strain>Tucson 15081-1352.22</strain>
    </source>
</reference>
<comment type="function">
    <text evidence="1">Ubiquitin-like modifier protein which binds to a number of as yet unidentified target proteins.</text>
</comment>
<comment type="similarity">
    <text evidence="3">Belongs to the UFM1 family.</text>
</comment>
<evidence type="ECO:0000250" key="1"/>
<evidence type="ECO:0000255" key="2"/>
<evidence type="ECO:0000305" key="3"/>
<keyword id="KW-1017">Isopeptide bond</keyword>
<keyword id="KW-1185">Reference proteome</keyword>
<keyword id="KW-0833">Ubl conjugation pathway</keyword>